<reference key="1">
    <citation type="journal article" date="2002" name="Nature">
        <title>Complete genome sequence of the model actinomycete Streptomyces coelicolor A3(2).</title>
        <authorList>
            <person name="Bentley S.D."/>
            <person name="Chater K.F."/>
            <person name="Cerdeno-Tarraga A.-M."/>
            <person name="Challis G.L."/>
            <person name="Thomson N.R."/>
            <person name="James K.D."/>
            <person name="Harris D.E."/>
            <person name="Quail M.A."/>
            <person name="Kieser H."/>
            <person name="Harper D."/>
            <person name="Bateman A."/>
            <person name="Brown S."/>
            <person name="Chandra G."/>
            <person name="Chen C.W."/>
            <person name="Collins M."/>
            <person name="Cronin A."/>
            <person name="Fraser A."/>
            <person name="Goble A."/>
            <person name="Hidalgo J."/>
            <person name="Hornsby T."/>
            <person name="Howarth S."/>
            <person name="Huang C.-H."/>
            <person name="Kieser T."/>
            <person name="Larke L."/>
            <person name="Murphy L.D."/>
            <person name="Oliver K."/>
            <person name="O'Neil S."/>
            <person name="Rabbinowitsch E."/>
            <person name="Rajandream M.A."/>
            <person name="Rutherford K.M."/>
            <person name="Rutter S."/>
            <person name="Seeger K."/>
            <person name="Saunders D."/>
            <person name="Sharp S."/>
            <person name="Squares R."/>
            <person name="Squares S."/>
            <person name="Taylor K."/>
            <person name="Warren T."/>
            <person name="Wietzorrek A."/>
            <person name="Woodward J.R."/>
            <person name="Barrell B.G."/>
            <person name="Parkhill J."/>
            <person name="Hopwood D.A."/>
        </authorList>
    </citation>
    <scope>NUCLEOTIDE SEQUENCE [LARGE SCALE GENOMIC DNA]</scope>
    <source>
        <strain>ATCC BAA-471 / A3(2) / M145</strain>
    </source>
</reference>
<name>Y2948_STRCO</name>
<organism>
    <name type="scientific">Streptomyces coelicolor (strain ATCC BAA-471 / A3(2) / M145)</name>
    <dbReference type="NCBI Taxonomy" id="100226"/>
    <lineage>
        <taxon>Bacteria</taxon>
        <taxon>Bacillati</taxon>
        <taxon>Actinomycetota</taxon>
        <taxon>Actinomycetes</taxon>
        <taxon>Kitasatosporales</taxon>
        <taxon>Streptomycetaceae</taxon>
        <taxon>Streptomyces</taxon>
        <taxon>Streptomyces albidoflavus group</taxon>
    </lineage>
</organism>
<comment type="similarity">
    <text evidence="1">Belongs to the UPF0301 (AlgH) family.</text>
</comment>
<feature type="chain" id="PRO_0000214349" description="UPF0301 protein SCO2948">
    <location>
        <begin position="1"/>
        <end position="193"/>
    </location>
</feature>
<dbReference type="EMBL" id="AL939114">
    <property type="protein sequence ID" value="CAB72194.1"/>
    <property type="molecule type" value="Genomic_DNA"/>
</dbReference>
<dbReference type="RefSeq" id="NP_627172.1">
    <property type="nucleotide sequence ID" value="NC_003888.3"/>
</dbReference>
<dbReference type="SMR" id="Q9L1U6"/>
<dbReference type="FunCoup" id="Q9L1U6">
    <property type="interactions" value="29"/>
</dbReference>
<dbReference type="STRING" id="100226.gene:17760559"/>
<dbReference type="PaxDb" id="100226-SCO2948"/>
<dbReference type="KEGG" id="sco:SCO2948"/>
<dbReference type="PATRIC" id="fig|100226.15.peg.3006"/>
<dbReference type="eggNOG" id="COG1678">
    <property type="taxonomic scope" value="Bacteria"/>
</dbReference>
<dbReference type="HOGENOM" id="CLU_057596_2_0_11"/>
<dbReference type="InParanoid" id="Q9L1U6"/>
<dbReference type="OrthoDB" id="9807486at2"/>
<dbReference type="PhylomeDB" id="Q9L1U6"/>
<dbReference type="Proteomes" id="UP000001973">
    <property type="component" value="Chromosome"/>
</dbReference>
<dbReference type="GO" id="GO:0005829">
    <property type="term" value="C:cytosol"/>
    <property type="evidence" value="ECO:0000318"/>
    <property type="project" value="GO_Central"/>
</dbReference>
<dbReference type="Gene3D" id="3.40.1740.10">
    <property type="entry name" value="VC0467-like"/>
    <property type="match status" value="1"/>
</dbReference>
<dbReference type="HAMAP" id="MF_00758">
    <property type="entry name" value="UPF0301"/>
    <property type="match status" value="1"/>
</dbReference>
<dbReference type="InterPro" id="IPR003774">
    <property type="entry name" value="AlgH-like"/>
</dbReference>
<dbReference type="NCBIfam" id="NF001270">
    <property type="entry name" value="PRK00228.2-2"/>
    <property type="match status" value="1"/>
</dbReference>
<dbReference type="PANTHER" id="PTHR30327">
    <property type="entry name" value="UNCHARACTERIZED PROTEIN YQGE"/>
    <property type="match status" value="1"/>
</dbReference>
<dbReference type="PANTHER" id="PTHR30327:SF1">
    <property type="entry name" value="UPF0301 PROTEIN YQGE"/>
    <property type="match status" value="1"/>
</dbReference>
<dbReference type="Pfam" id="PF02622">
    <property type="entry name" value="DUF179"/>
    <property type="match status" value="1"/>
</dbReference>
<dbReference type="SUPFAM" id="SSF143456">
    <property type="entry name" value="VC0467-like"/>
    <property type="match status" value="1"/>
</dbReference>
<evidence type="ECO:0000255" key="1">
    <source>
        <dbReference type="HAMAP-Rule" id="MF_00758"/>
    </source>
</evidence>
<gene>
    <name type="ordered locus">SCO2948</name>
    <name type="ORF">SCE59.07c</name>
</gene>
<proteinExistence type="inferred from homology"/>
<accession>Q9L1U6</accession>
<keyword id="KW-1185">Reference proteome</keyword>
<protein>
    <recommendedName>
        <fullName evidence="1">UPF0301 protein SCO2948</fullName>
    </recommendedName>
</protein>
<sequence>MSGMTEVSSLTGRLLVATPALADPNFERAVVLLLDHDEEGSLGVVLNRPTPVDVGDILEDWADLAGEPGVVFQGGPVSLDSALGVAVVPGGASGERAPLGWRRVHGAIGLVDLEAPPELLAPAVGALRIFAGYAGWGPGQLEDELTEGAWYVVESEPGDVSSPFPERLWREVLRRQRGDLAMVATYPDDPSLN</sequence>